<feature type="chain" id="PRO_0000053714" description="Nuclear receptor subfamily 4 group A member 1">
    <location>
        <begin position="1"/>
        <end position="598"/>
    </location>
</feature>
<feature type="domain" description="NR LBD" evidence="6">
    <location>
        <begin position="360"/>
        <end position="595"/>
    </location>
</feature>
<feature type="DNA-binding region" description="Nuclear receptor" evidence="5">
    <location>
        <begin position="264"/>
        <end position="339"/>
    </location>
</feature>
<feature type="zinc finger region" description="NR C4-type" evidence="5">
    <location>
        <begin position="267"/>
        <end position="287"/>
    </location>
</feature>
<feature type="zinc finger region" description="NR C4-type" evidence="5">
    <location>
        <begin position="303"/>
        <end position="327"/>
    </location>
</feature>
<feature type="region of interest" description="Disordered" evidence="7">
    <location>
        <begin position="1"/>
        <end position="50"/>
    </location>
</feature>
<feature type="region of interest" description="Disordered" evidence="7">
    <location>
        <begin position="120"/>
        <end position="159"/>
    </location>
</feature>
<feature type="region of interest" description="Required for nuclear import" evidence="3">
    <location>
        <begin position="171"/>
        <end position="466"/>
    </location>
</feature>
<feature type="region of interest" description="Required for binding NBRE-containing DNA" evidence="2">
    <location>
        <begin position="268"/>
        <end position="354"/>
    </location>
</feature>
<feature type="region of interest" description="Required for the interaction with RXRA" evidence="3">
    <location>
        <begin position="299"/>
        <end position="361"/>
    </location>
</feature>
<feature type="region of interest" description="Disordered" evidence="7">
    <location>
        <begin position="341"/>
        <end position="361"/>
    </location>
</feature>
<feature type="region of interest" description="Binds lipopolysaccharide" evidence="2">
    <location>
        <begin position="521"/>
        <end position="544"/>
    </location>
</feature>
<feature type="region of interest" description="AF-2" evidence="6">
    <location>
        <begin position="584"/>
        <end position="595"/>
    </location>
</feature>
<feature type="compositionally biased region" description="Low complexity" evidence="7">
    <location>
        <begin position="37"/>
        <end position="50"/>
    </location>
</feature>
<feature type="compositionally biased region" description="Low complexity" evidence="7">
    <location>
        <begin position="134"/>
        <end position="145"/>
    </location>
</feature>
<feature type="modified residue" description="Phosphoserine; by PKA" evidence="4">
    <location>
        <position position="341"/>
    </location>
</feature>
<feature type="modified residue" description="Phosphoserine; by PKA, RPS6KA1 and RPS6KA3" evidence="4">
    <location>
        <position position="351"/>
    </location>
</feature>
<sequence length="598" mass="64424">MPCIQAQYGTPAPSPGPRDHLASDPLTPELSKPTMDLASPEAAPTAPTALPSFSTFMDGYTGEFDTFLYQLPGTAQPCSSASSSASSTSSSSATSPASASFKFEDFQVYGCYPGPLSGPLDETLSSSGSDYYGSPCSAPSPSTPSFQPPQLSPWDGSFGPFSPSQTYEGLRAWTEQLPKASGHPQPPAFFSFSPPTGPSPSLAQSPLKLFPSQATCQLGERESYSISTAFPGLAPTSPHLDGPGMLDAPVPSAKARSGAPSGSEGRCAVCGDNASCQHYGVRTCEGCKGFFKRTVQKNAKYICLANKDCPVDKRRRNRCQFCRFQKCLAVGMVKEVVRTDSLKGRRGRLPSKPKQPPDASPANLLTSLVRAHLDSGPSTAKLDYSKFQELVLPHFGKEDAGDVQQFYDLLSGSLEVIRKWAEKIPGFAELSPGDQDLLLESAFLELFILRLAYRSKPAEGKLIFCSGLVLHRLQCARGFGDWIDSILAFSRSLHGLVVDVPAFACLSALVLITDRHGLQEPRRVEELQNRIASCLKEHVSAVAGEPQPASCLSRLLGKLPELRTLCTQGLQRIFYLKLEDLVPPPPIVDKIFMDTLPF</sequence>
<keyword id="KW-0007">Acetylation</keyword>
<keyword id="KW-0963">Cytoplasm</keyword>
<keyword id="KW-0238">DNA-binding</keyword>
<keyword id="KW-0395">Inflammatory response</keyword>
<keyword id="KW-0479">Metal-binding</keyword>
<keyword id="KW-0496">Mitochondrion</keyword>
<keyword id="KW-0539">Nucleus</keyword>
<keyword id="KW-0597">Phosphoprotein</keyword>
<keyword id="KW-0675">Receptor</keyword>
<keyword id="KW-1185">Reference proteome</keyword>
<keyword id="KW-0804">Transcription</keyword>
<keyword id="KW-0805">Transcription regulation</keyword>
<keyword id="KW-0862">Zinc</keyword>
<keyword id="KW-0863">Zinc-finger</keyword>
<gene>
    <name type="primary">NR4A1</name>
    <name type="synonym">HMR</name>
</gene>
<dbReference type="EMBL" id="X97226">
    <property type="protein sequence ID" value="CAA65863.1"/>
    <property type="molecule type" value="mRNA"/>
</dbReference>
<dbReference type="RefSeq" id="NP_001003227.1">
    <property type="nucleotide sequence ID" value="NM_001003227.1"/>
</dbReference>
<dbReference type="RefSeq" id="XP_005636733.1">
    <property type="nucleotide sequence ID" value="XM_005636676.2"/>
</dbReference>
<dbReference type="RefSeq" id="XP_013963720.1">
    <property type="nucleotide sequence ID" value="XM_014108245.1"/>
</dbReference>
<dbReference type="RefSeq" id="XP_013963721.1">
    <property type="nucleotide sequence ID" value="XM_014108246.1"/>
</dbReference>
<dbReference type="RefSeq" id="XP_038293667.1">
    <property type="nucleotide sequence ID" value="XM_038437739.1"/>
</dbReference>
<dbReference type="RefSeq" id="XP_038293668.1">
    <property type="nucleotide sequence ID" value="XM_038437740.1"/>
</dbReference>
<dbReference type="RefSeq" id="XP_038293670.1">
    <property type="nucleotide sequence ID" value="XM_038437742.1"/>
</dbReference>
<dbReference type="RefSeq" id="XP_038293671.1">
    <property type="nucleotide sequence ID" value="XM_038437743.1"/>
</dbReference>
<dbReference type="RefSeq" id="XP_038293672.1">
    <property type="nucleotide sequence ID" value="XM_038437744.1"/>
</dbReference>
<dbReference type="SMR" id="P51666"/>
<dbReference type="FunCoup" id="P51666">
    <property type="interactions" value="167"/>
</dbReference>
<dbReference type="STRING" id="9615.ENSCAFP00000062914"/>
<dbReference type="PaxDb" id="9612-ENSCAFP00000010883"/>
<dbReference type="Ensembl" id="ENSCAFT00845047929.1">
    <property type="protein sequence ID" value="ENSCAFP00845037598.1"/>
    <property type="gene ID" value="ENSCAFG00845026982.1"/>
</dbReference>
<dbReference type="GeneID" id="403897"/>
<dbReference type="KEGG" id="cfa:403897"/>
<dbReference type="CTD" id="3164"/>
<dbReference type="VEuPathDB" id="HostDB:ENSCAFG00845026982"/>
<dbReference type="eggNOG" id="KOG4217">
    <property type="taxonomic scope" value="Eukaryota"/>
</dbReference>
<dbReference type="GeneTree" id="ENSGT00950000183038"/>
<dbReference type="InParanoid" id="P51666"/>
<dbReference type="OrthoDB" id="5952118at2759"/>
<dbReference type="Reactome" id="R-CFA-383280">
    <property type="pathway name" value="Nuclear Receptor transcription pathway"/>
</dbReference>
<dbReference type="Proteomes" id="UP000002254">
    <property type="component" value="Unplaced"/>
</dbReference>
<dbReference type="Proteomes" id="UP000694429">
    <property type="component" value="Unplaced"/>
</dbReference>
<dbReference type="Proteomes" id="UP000694542">
    <property type="component" value="Unplaced"/>
</dbReference>
<dbReference type="Proteomes" id="UP000805418">
    <property type="component" value="Chromosome 27"/>
</dbReference>
<dbReference type="Bgee" id="ENSCAFG00000007338">
    <property type="expression patterns" value="Expressed in tongue and 48 other cell types or tissues"/>
</dbReference>
<dbReference type="GO" id="GO:0000785">
    <property type="term" value="C:chromatin"/>
    <property type="evidence" value="ECO:0000250"/>
    <property type="project" value="UniProtKB"/>
</dbReference>
<dbReference type="GO" id="GO:0005829">
    <property type="term" value="C:cytosol"/>
    <property type="evidence" value="ECO:0000250"/>
    <property type="project" value="UniProtKB"/>
</dbReference>
<dbReference type="GO" id="GO:0005739">
    <property type="term" value="C:mitochondrion"/>
    <property type="evidence" value="ECO:0000250"/>
    <property type="project" value="UniProtKB"/>
</dbReference>
<dbReference type="GO" id="GO:0005634">
    <property type="term" value="C:nucleus"/>
    <property type="evidence" value="ECO:0000250"/>
    <property type="project" value="UniProtKB"/>
</dbReference>
<dbReference type="GO" id="GO:0005667">
    <property type="term" value="C:transcription regulator complex"/>
    <property type="evidence" value="ECO:0000318"/>
    <property type="project" value="GO_Central"/>
</dbReference>
<dbReference type="GO" id="GO:0001228">
    <property type="term" value="F:DNA-binding transcription activator activity, RNA polymerase II-specific"/>
    <property type="evidence" value="ECO:0000250"/>
    <property type="project" value="UniProtKB"/>
</dbReference>
<dbReference type="GO" id="GO:0000981">
    <property type="term" value="F:DNA-binding transcription factor activity, RNA polymerase II-specific"/>
    <property type="evidence" value="ECO:0000250"/>
    <property type="project" value="UniProtKB"/>
</dbReference>
<dbReference type="GO" id="GO:0003690">
    <property type="term" value="F:double-stranded DNA binding"/>
    <property type="evidence" value="ECO:0000250"/>
    <property type="project" value="UniProtKB"/>
</dbReference>
<dbReference type="GO" id="GO:0001530">
    <property type="term" value="F:lipopolysaccharide binding"/>
    <property type="evidence" value="ECO:0000250"/>
    <property type="project" value="UniProtKB"/>
</dbReference>
<dbReference type="GO" id="GO:0035259">
    <property type="term" value="F:nuclear glucocorticoid receptor binding"/>
    <property type="evidence" value="ECO:0000318"/>
    <property type="project" value="GO_Central"/>
</dbReference>
<dbReference type="GO" id="GO:0004879">
    <property type="term" value="F:nuclear receptor activity"/>
    <property type="evidence" value="ECO:0007669"/>
    <property type="project" value="InterPro"/>
</dbReference>
<dbReference type="GO" id="GO:0046982">
    <property type="term" value="F:protein heterodimerization activity"/>
    <property type="evidence" value="ECO:0000250"/>
    <property type="project" value="UniProtKB"/>
</dbReference>
<dbReference type="GO" id="GO:0000978">
    <property type="term" value="F:RNA polymerase II cis-regulatory region sequence-specific DNA binding"/>
    <property type="evidence" value="ECO:0000318"/>
    <property type="project" value="GO_Central"/>
</dbReference>
<dbReference type="GO" id="GO:0008270">
    <property type="term" value="F:zinc ion binding"/>
    <property type="evidence" value="ECO:0007669"/>
    <property type="project" value="UniProtKB-KW"/>
</dbReference>
<dbReference type="GO" id="GO:0071376">
    <property type="term" value="P:cellular response to corticotropin-releasing hormone stimulus"/>
    <property type="evidence" value="ECO:0000250"/>
    <property type="project" value="UniProtKB"/>
</dbReference>
<dbReference type="GO" id="GO:0032497">
    <property type="term" value="P:detection of lipopolysaccharide"/>
    <property type="evidence" value="ECO:0000250"/>
    <property type="project" value="UniProtKB"/>
</dbReference>
<dbReference type="GO" id="GO:0045444">
    <property type="term" value="P:fat cell differentiation"/>
    <property type="evidence" value="ECO:0000250"/>
    <property type="project" value="UniProtKB"/>
</dbReference>
<dbReference type="GO" id="GO:0006954">
    <property type="term" value="P:inflammatory response"/>
    <property type="evidence" value="ECO:0007669"/>
    <property type="project" value="UniProtKB-KW"/>
</dbReference>
<dbReference type="GO" id="GO:0045786">
    <property type="term" value="P:negative regulation of cell cycle"/>
    <property type="evidence" value="ECO:0000250"/>
    <property type="project" value="UniProtKB"/>
</dbReference>
<dbReference type="GO" id="GO:0160075">
    <property type="term" value="P:non-canonical inflammasome complex assembly"/>
    <property type="evidence" value="ECO:0000250"/>
    <property type="project" value="UniProtKB"/>
</dbReference>
<dbReference type="GO" id="GO:0045944">
    <property type="term" value="P:positive regulation of transcription by RNA polymerase II"/>
    <property type="evidence" value="ECO:0000250"/>
    <property type="project" value="UniProtKB"/>
</dbReference>
<dbReference type="GO" id="GO:0006357">
    <property type="term" value="P:regulation of transcription by RNA polymerase II"/>
    <property type="evidence" value="ECO:0000318"/>
    <property type="project" value="GO_Central"/>
</dbReference>
<dbReference type="GO" id="GO:0061469">
    <property type="term" value="P:regulation of type B pancreatic cell proliferation"/>
    <property type="evidence" value="ECO:0000250"/>
    <property type="project" value="UniProtKB"/>
</dbReference>
<dbReference type="CDD" id="cd06969">
    <property type="entry name" value="NR_DBD_NGFI-B"/>
    <property type="match status" value="1"/>
</dbReference>
<dbReference type="CDD" id="cd07348">
    <property type="entry name" value="NR_LBD_NGFI-B"/>
    <property type="match status" value="1"/>
</dbReference>
<dbReference type="FunFam" id="1.10.565.10:FF:000008">
    <property type="entry name" value="Nuclear receptor subfamily 4 group A member 1"/>
    <property type="match status" value="1"/>
</dbReference>
<dbReference type="FunFam" id="3.30.50.10:FF:000009">
    <property type="entry name" value="nuclear receptor subfamily 4 group A member 2"/>
    <property type="match status" value="1"/>
</dbReference>
<dbReference type="Gene3D" id="3.30.50.10">
    <property type="entry name" value="Erythroid Transcription Factor GATA-1, subunit A"/>
    <property type="match status" value="1"/>
</dbReference>
<dbReference type="Gene3D" id="1.10.565.10">
    <property type="entry name" value="Retinoid X Receptor"/>
    <property type="match status" value="1"/>
</dbReference>
<dbReference type="InterPro" id="IPR035500">
    <property type="entry name" value="NHR-like_dom_sf"/>
</dbReference>
<dbReference type="InterPro" id="IPR003071">
    <property type="entry name" value="NR4A1"/>
</dbReference>
<dbReference type="InterPro" id="IPR003070">
    <property type="entry name" value="NR4A1-3"/>
</dbReference>
<dbReference type="InterPro" id="IPR000536">
    <property type="entry name" value="Nucl_hrmn_rcpt_lig-bd"/>
</dbReference>
<dbReference type="InterPro" id="IPR001723">
    <property type="entry name" value="Nuclear_hrmn_rcpt"/>
</dbReference>
<dbReference type="InterPro" id="IPR001628">
    <property type="entry name" value="Znf_hrmn_rcpt"/>
</dbReference>
<dbReference type="InterPro" id="IPR013088">
    <property type="entry name" value="Znf_NHR/GATA"/>
</dbReference>
<dbReference type="PANTHER" id="PTHR24085">
    <property type="entry name" value="NUCLEAR HORMONE RECEPTOR"/>
    <property type="match status" value="1"/>
</dbReference>
<dbReference type="PANTHER" id="PTHR24085:SF1">
    <property type="entry name" value="NUCLEAR RECEPTOR SUBFAMILY 4 GROUP A MEMBER 1"/>
    <property type="match status" value="1"/>
</dbReference>
<dbReference type="Pfam" id="PF00104">
    <property type="entry name" value="Hormone_recep"/>
    <property type="match status" value="1"/>
</dbReference>
<dbReference type="Pfam" id="PF00105">
    <property type="entry name" value="zf-C4"/>
    <property type="match status" value="1"/>
</dbReference>
<dbReference type="PRINTS" id="PR01285">
    <property type="entry name" value="HMRNUCRECPTR"/>
</dbReference>
<dbReference type="PRINTS" id="PR01284">
    <property type="entry name" value="NUCLEARECPTR"/>
</dbReference>
<dbReference type="PRINTS" id="PR00398">
    <property type="entry name" value="STRDHORMONER"/>
</dbReference>
<dbReference type="PRINTS" id="PR00047">
    <property type="entry name" value="STROIDFINGER"/>
</dbReference>
<dbReference type="SMART" id="SM00430">
    <property type="entry name" value="HOLI"/>
    <property type="match status" value="1"/>
</dbReference>
<dbReference type="SMART" id="SM00399">
    <property type="entry name" value="ZnF_C4"/>
    <property type="match status" value="1"/>
</dbReference>
<dbReference type="SUPFAM" id="SSF57716">
    <property type="entry name" value="Glucocorticoid receptor-like (DNA-binding domain)"/>
    <property type="match status" value="1"/>
</dbReference>
<dbReference type="SUPFAM" id="SSF48508">
    <property type="entry name" value="Nuclear receptor ligand-binding domain"/>
    <property type="match status" value="1"/>
</dbReference>
<dbReference type="PROSITE" id="PS51843">
    <property type="entry name" value="NR_LBD"/>
    <property type="match status" value="1"/>
</dbReference>
<dbReference type="PROSITE" id="PS00031">
    <property type="entry name" value="NUCLEAR_REC_DBD_1"/>
    <property type="match status" value="1"/>
</dbReference>
<dbReference type="PROSITE" id="PS51030">
    <property type="entry name" value="NUCLEAR_REC_DBD_2"/>
    <property type="match status" value="1"/>
</dbReference>
<protein>
    <recommendedName>
        <fullName>Nuclear receptor subfamily 4 group A member 1</fullName>
    </recommendedName>
    <alternativeName>
        <fullName>Orphan nuclear receptor HMR</fullName>
    </alternativeName>
    <alternativeName>
        <fullName>Orphan nuclear receptor NGFI-B</fullName>
    </alternativeName>
</protein>
<evidence type="ECO:0000250" key="1"/>
<evidence type="ECO:0000250" key="2">
    <source>
        <dbReference type="UniProtKB" id="P12813"/>
    </source>
</evidence>
<evidence type="ECO:0000250" key="3">
    <source>
        <dbReference type="UniProtKB" id="P22736"/>
    </source>
</evidence>
<evidence type="ECO:0000250" key="4">
    <source>
        <dbReference type="UniProtKB" id="P22829"/>
    </source>
</evidence>
<evidence type="ECO:0000255" key="5">
    <source>
        <dbReference type="PROSITE-ProRule" id="PRU00407"/>
    </source>
</evidence>
<evidence type="ECO:0000255" key="6">
    <source>
        <dbReference type="PROSITE-ProRule" id="PRU01189"/>
    </source>
</evidence>
<evidence type="ECO:0000256" key="7">
    <source>
        <dbReference type="SAM" id="MobiDB-lite"/>
    </source>
</evidence>
<evidence type="ECO:0000305" key="8"/>
<accession>P51666</accession>
<name>NR4A1_CANLF</name>
<comment type="function">
    <text evidence="2 3 4">Orphan nuclear receptor. Binds the NGFI-B response element (NBRE) 5'-AAAGGTCA-3' (By similarity). Binds 9-cis-retinoic acid outside of its ligand-binding (NR LBD) domain (By similarity). Participates in energy homeostasis by sequestrating the kinase STK11 in the nucleus, thereby attenuating cytoplasmic AMPK activation (By similarity). Regulates the inflammatory response in macrophages by regulating metabolic adaptations during inflammation, including repressing the transcription of genes involved in the citric acid cycle (TCA) (By similarity). Inhibits NF-kappa-B signaling by binding to low-affinity NF-kappa-B binding sites, such as at the IL2 promoter (By similarity). May act concomitantly with NR4A2 in regulating the expression of delayed-early genes during liver regeneration (By similarity). Plays a role in the vascular response to injury (By similarity).</text>
</comment>
<comment type="function">
    <text evidence="2">In the cytosol, upon its detection of both bacterial lipopolysaccharide (LPS) and NBRE-containing mitochondrial DNA released by GSDMD pores during pyroptosis, it promotes non-canonical NLRP3 inflammasome activation by stimulating association of NLRP3 and NEK7.</text>
</comment>
<comment type="cofactor">
    <cofactor evidence="4">
        <name>Zn(2+)</name>
        <dbReference type="ChEBI" id="CHEBI:29105"/>
    </cofactor>
    <text evidence="4">Binds 2 zinc ions.</text>
</comment>
<comment type="subunit">
    <text evidence="2 3 4">Binds the NGFI-B response element (NBRE) as a monomer (By similarity). Binds the Nur response element (NurRE), consisting of two inverse NBRE-related octanucleotide repeats separated by 6 base-pairs, as a dimer (By similarity). Interacts (via N-terminus) with NLRP3 (via LRR repeat domain); the interaction is direct, requires binding of NR4A1/Nur77 to NBRE-containing dsDNA and lipopolysaccharide, and leads to non-canonical NLRP3 inflammasome activation (By similarity). Interacts with GADD45GIP1. Interacts with STK11. Heterodimer (via DNA-binding domain) with RXRA (via C-terminus); DNA-binding of the heterodimer is enhanced by 9-cis retinoic acid (By similarity). Competes for the RXRA interaction with EP300 and thereby attenuates EP300 mediated acetylation of RXRA (By similarity). Interacts with NCOA1 (By similarity). Interacts with NCOA2 (By similarity). Interacts with NCOA3 (By similarity).</text>
</comment>
<comment type="subcellular location">
    <subcellularLocation>
        <location evidence="3">Cytoplasm</location>
        <location evidence="3">Cytosol</location>
    </subcellularLocation>
    <subcellularLocation>
        <location evidence="3">Nucleus</location>
    </subcellularLocation>
    <subcellularLocation>
        <location evidence="3">Mitochondrion</location>
    </subcellularLocation>
    <text evidence="3">Translocation to the mitochondrion upon interaction with RXRA and upon the presence of 9-cis retinoic acid.</text>
</comment>
<comment type="domain">
    <text evidence="2">The NR LBD domain binds the lipid A moiety of lipopolysaccharide (LPS) in the cytosol.</text>
</comment>
<comment type="PTM">
    <text evidence="1">Phosphorylated at Ser-351 by RPS6KA1 and RPS6KA3 in response to mitogenic or stress stimuli.</text>
</comment>
<comment type="PTM">
    <text evidence="1">Acetylated by p300/CBP, acetylation increases stability. Deacetylated by HDAC1 (By similarity).</text>
</comment>
<comment type="similarity">
    <text evidence="8">Belongs to the nuclear hormone receptor family. NR4 subfamily.</text>
</comment>
<organism>
    <name type="scientific">Canis lupus familiaris</name>
    <name type="common">Dog</name>
    <name type="synonym">Canis familiaris</name>
    <dbReference type="NCBI Taxonomy" id="9615"/>
    <lineage>
        <taxon>Eukaryota</taxon>
        <taxon>Metazoa</taxon>
        <taxon>Chordata</taxon>
        <taxon>Craniata</taxon>
        <taxon>Vertebrata</taxon>
        <taxon>Euteleostomi</taxon>
        <taxon>Mammalia</taxon>
        <taxon>Eutheria</taxon>
        <taxon>Laurasiatheria</taxon>
        <taxon>Carnivora</taxon>
        <taxon>Caniformia</taxon>
        <taxon>Canidae</taxon>
        <taxon>Canis</taxon>
    </lineage>
</organism>
<reference key="1">
    <citation type="journal article" date="1996" name="Endocrinology">
        <title>Induction of nerve growth factor-induced gene-B (NGFI-B) as an early event in the cyclic adenosine monophosphate response of dog thyrocytes in primary culture.</title>
        <authorList>
            <person name="Pichon B."/>
            <person name="Jimenez-Cervantes C."/>
            <person name="Pirson I."/>
            <person name="Maenhaut C."/>
            <person name="Christophe D."/>
        </authorList>
    </citation>
    <scope>NUCLEOTIDE SEQUENCE [MRNA]</scope>
</reference>
<proteinExistence type="evidence at transcript level"/>